<protein>
    <recommendedName>
        <fullName evidence="1">Thymidylate synthase</fullName>
        <shortName evidence="1">TS</shortName>
        <shortName evidence="1">TSase</shortName>
        <ecNumber evidence="1">2.1.1.45</ecNumber>
    </recommendedName>
</protein>
<keyword id="KW-0963">Cytoplasm</keyword>
<keyword id="KW-0489">Methyltransferase</keyword>
<keyword id="KW-0545">Nucleotide biosynthesis</keyword>
<keyword id="KW-1185">Reference proteome</keyword>
<keyword id="KW-0808">Transferase</keyword>
<name>TYSY_LACP3</name>
<proteinExistence type="inferred from homology"/>
<feature type="chain" id="PRO_1000000613" description="Thymidylate synthase">
    <location>
        <begin position="1"/>
        <end position="316"/>
    </location>
</feature>
<feature type="active site" description="Nucleophile" evidence="1">
    <location>
        <position position="198"/>
    </location>
</feature>
<feature type="binding site" description="in other chain" evidence="1">
    <location>
        <position position="23"/>
    </location>
    <ligand>
        <name>dUMP</name>
        <dbReference type="ChEBI" id="CHEBI:246422"/>
        <note>ligand shared between dimeric partners</note>
    </ligand>
</feature>
<feature type="binding site" evidence="1">
    <location>
        <begin position="178"/>
        <end position="179"/>
    </location>
    <ligand>
        <name>dUMP</name>
        <dbReference type="ChEBI" id="CHEBI:246422"/>
        <note>ligand shared between dimeric partners</note>
    </ligand>
</feature>
<feature type="binding site" description="in other chain" evidence="1">
    <location>
        <begin position="218"/>
        <end position="221"/>
    </location>
    <ligand>
        <name>dUMP</name>
        <dbReference type="ChEBI" id="CHEBI:246422"/>
        <note>ligand shared between dimeric partners</note>
    </ligand>
</feature>
<feature type="binding site" evidence="1">
    <location>
        <position position="221"/>
    </location>
    <ligand>
        <name>(6R)-5,10-methylene-5,6,7,8-tetrahydrofolate</name>
        <dbReference type="ChEBI" id="CHEBI:15636"/>
    </ligand>
</feature>
<feature type="binding site" description="in other chain" evidence="1">
    <location>
        <position position="229"/>
    </location>
    <ligand>
        <name>dUMP</name>
        <dbReference type="ChEBI" id="CHEBI:246422"/>
        <note>ligand shared between dimeric partners</note>
    </ligand>
</feature>
<feature type="binding site" description="in other chain" evidence="1">
    <location>
        <begin position="259"/>
        <end position="261"/>
    </location>
    <ligand>
        <name>dUMP</name>
        <dbReference type="ChEBI" id="CHEBI:246422"/>
        <note>ligand shared between dimeric partners</note>
    </ligand>
</feature>
<feature type="binding site" evidence="1">
    <location>
        <position position="315"/>
    </location>
    <ligand>
        <name>(6R)-5,10-methylene-5,6,7,8-tetrahydrofolate</name>
        <dbReference type="ChEBI" id="CHEBI:15636"/>
    </ligand>
</feature>
<comment type="function">
    <text evidence="1">Catalyzes the reductive methylation of 2'-deoxyuridine-5'-monophosphate (dUMP) to 2'-deoxythymidine-5'-monophosphate (dTMP) while utilizing 5,10-methylenetetrahydrofolate (mTHF) as the methyl donor and reductant in the reaction, yielding dihydrofolate (DHF) as a by-product. This enzymatic reaction provides an intracellular de novo source of dTMP, an essential precursor for DNA biosynthesis.</text>
</comment>
<comment type="catalytic activity">
    <reaction evidence="1">
        <text>dUMP + (6R)-5,10-methylene-5,6,7,8-tetrahydrofolate = 7,8-dihydrofolate + dTMP</text>
        <dbReference type="Rhea" id="RHEA:12104"/>
        <dbReference type="ChEBI" id="CHEBI:15636"/>
        <dbReference type="ChEBI" id="CHEBI:57451"/>
        <dbReference type="ChEBI" id="CHEBI:63528"/>
        <dbReference type="ChEBI" id="CHEBI:246422"/>
        <dbReference type="EC" id="2.1.1.45"/>
    </reaction>
</comment>
<comment type="pathway">
    <text evidence="1">Pyrimidine metabolism; dTTP biosynthesis.</text>
</comment>
<comment type="subunit">
    <text evidence="1">Homodimer.</text>
</comment>
<comment type="subcellular location">
    <subcellularLocation>
        <location evidence="1">Cytoplasm</location>
    </subcellularLocation>
</comment>
<comment type="similarity">
    <text evidence="1">Belongs to the thymidylate synthase family. Bacterial-type ThyA subfamily.</text>
</comment>
<dbReference type="EC" id="2.1.1.45" evidence="1"/>
<dbReference type="EMBL" id="CP000423">
    <property type="protein sequence ID" value="ABJ70165.1"/>
    <property type="molecule type" value="Genomic_DNA"/>
</dbReference>
<dbReference type="RefSeq" id="WP_003598632.1">
    <property type="nucleotide sequence ID" value="NC_008526.1"/>
</dbReference>
<dbReference type="RefSeq" id="YP_806607.1">
    <property type="nucleotide sequence ID" value="NC_008526.1"/>
</dbReference>
<dbReference type="SMR" id="Q039F7"/>
<dbReference type="STRING" id="321967.LSEI_1387"/>
<dbReference type="PaxDb" id="321967-LSEI_1387"/>
<dbReference type="KEGG" id="lca:LSEI_1387"/>
<dbReference type="PATRIC" id="fig|321967.11.peg.1366"/>
<dbReference type="HOGENOM" id="CLU_021669_0_2_9"/>
<dbReference type="UniPathway" id="UPA00575"/>
<dbReference type="Proteomes" id="UP000001651">
    <property type="component" value="Chromosome"/>
</dbReference>
<dbReference type="GO" id="GO:0005829">
    <property type="term" value="C:cytosol"/>
    <property type="evidence" value="ECO:0007669"/>
    <property type="project" value="TreeGrafter"/>
</dbReference>
<dbReference type="GO" id="GO:0004799">
    <property type="term" value="F:thymidylate synthase activity"/>
    <property type="evidence" value="ECO:0007669"/>
    <property type="project" value="UniProtKB-UniRule"/>
</dbReference>
<dbReference type="GO" id="GO:0006231">
    <property type="term" value="P:dTMP biosynthetic process"/>
    <property type="evidence" value="ECO:0007669"/>
    <property type="project" value="UniProtKB-UniRule"/>
</dbReference>
<dbReference type="GO" id="GO:0006235">
    <property type="term" value="P:dTTP biosynthetic process"/>
    <property type="evidence" value="ECO:0007669"/>
    <property type="project" value="UniProtKB-UniRule"/>
</dbReference>
<dbReference type="GO" id="GO:0032259">
    <property type="term" value="P:methylation"/>
    <property type="evidence" value="ECO:0007669"/>
    <property type="project" value="UniProtKB-KW"/>
</dbReference>
<dbReference type="CDD" id="cd00351">
    <property type="entry name" value="TS_Pyrimidine_HMase"/>
    <property type="match status" value="1"/>
</dbReference>
<dbReference type="Gene3D" id="3.30.572.10">
    <property type="entry name" value="Thymidylate synthase/dCMP hydroxymethylase domain"/>
    <property type="match status" value="1"/>
</dbReference>
<dbReference type="HAMAP" id="MF_00008">
    <property type="entry name" value="Thymidy_synth_bact"/>
    <property type="match status" value="1"/>
</dbReference>
<dbReference type="InterPro" id="IPR045097">
    <property type="entry name" value="Thymidate_synth/dCMP_Mease"/>
</dbReference>
<dbReference type="InterPro" id="IPR023451">
    <property type="entry name" value="Thymidate_synth/dCMP_Mease_dom"/>
</dbReference>
<dbReference type="InterPro" id="IPR036926">
    <property type="entry name" value="Thymidate_synth/dCMP_Mease_sf"/>
</dbReference>
<dbReference type="InterPro" id="IPR000398">
    <property type="entry name" value="Thymidylate_synthase"/>
</dbReference>
<dbReference type="InterPro" id="IPR020940">
    <property type="entry name" value="Thymidylate_synthase_AS"/>
</dbReference>
<dbReference type="NCBIfam" id="NF002496">
    <property type="entry name" value="PRK01827.1-2"/>
    <property type="match status" value="1"/>
</dbReference>
<dbReference type="NCBIfam" id="TIGR03284">
    <property type="entry name" value="thym_sym"/>
    <property type="match status" value="1"/>
</dbReference>
<dbReference type="PANTHER" id="PTHR11548:SF9">
    <property type="entry name" value="THYMIDYLATE SYNTHASE"/>
    <property type="match status" value="1"/>
</dbReference>
<dbReference type="PANTHER" id="PTHR11548">
    <property type="entry name" value="THYMIDYLATE SYNTHASE 1"/>
    <property type="match status" value="1"/>
</dbReference>
<dbReference type="Pfam" id="PF00303">
    <property type="entry name" value="Thymidylat_synt"/>
    <property type="match status" value="1"/>
</dbReference>
<dbReference type="PRINTS" id="PR00108">
    <property type="entry name" value="THYMDSNTHASE"/>
</dbReference>
<dbReference type="SUPFAM" id="SSF55831">
    <property type="entry name" value="Thymidylate synthase/dCMP hydroxymethylase"/>
    <property type="match status" value="1"/>
</dbReference>
<dbReference type="PROSITE" id="PS00091">
    <property type="entry name" value="THYMIDYLATE_SYNTHASE"/>
    <property type="match status" value="1"/>
</dbReference>
<reference key="1">
    <citation type="journal article" date="2006" name="Proc. Natl. Acad. Sci. U.S.A.">
        <title>Comparative genomics of the lactic acid bacteria.</title>
        <authorList>
            <person name="Makarova K.S."/>
            <person name="Slesarev A."/>
            <person name="Wolf Y.I."/>
            <person name="Sorokin A."/>
            <person name="Mirkin B."/>
            <person name="Koonin E.V."/>
            <person name="Pavlov A."/>
            <person name="Pavlova N."/>
            <person name="Karamychev V."/>
            <person name="Polouchine N."/>
            <person name="Shakhova V."/>
            <person name="Grigoriev I."/>
            <person name="Lou Y."/>
            <person name="Rohksar D."/>
            <person name="Lucas S."/>
            <person name="Huang K."/>
            <person name="Goodstein D.M."/>
            <person name="Hawkins T."/>
            <person name="Plengvidhya V."/>
            <person name="Welker D."/>
            <person name="Hughes J."/>
            <person name="Goh Y."/>
            <person name="Benson A."/>
            <person name="Baldwin K."/>
            <person name="Lee J.-H."/>
            <person name="Diaz-Muniz I."/>
            <person name="Dosti B."/>
            <person name="Smeianov V."/>
            <person name="Wechter W."/>
            <person name="Barabote R."/>
            <person name="Lorca G."/>
            <person name="Altermann E."/>
            <person name="Barrangou R."/>
            <person name="Ganesan B."/>
            <person name="Xie Y."/>
            <person name="Rawsthorne H."/>
            <person name="Tamir D."/>
            <person name="Parker C."/>
            <person name="Breidt F."/>
            <person name="Broadbent J.R."/>
            <person name="Hutkins R."/>
            <person name="O'Sullivan D."/>
            <person name="Steele J."/>
            <person name="Unlu G."/>
            <person name="Saier M.H. Jr."/>
            <person name="Klaenhammer T."/>
            <person name="Richardson P."/>
            <person name="Kozyavkin S."/>
            <person name="Weimer B.C."/>
            <person name="Mills D.A."/>
        </authorList>
    </citation>
    <scope>NUCLEOTIDE SEQUENCE [LARGE SCALE GENOMIC DNA]</scope>
    <source>
        <strain>ATCC 334 / BCRC 17002 / CCUG 31169 / CIP 107868 / KCTC 3260 / NRRL B-441</strain>
    </source>
</reference>
<gene>
    <name evidence="1" type="primary">thyA</name>
    <name type="ordered locus">LSEI_1387</name>
</gene>
<accession>Q039F7</accession>
<sequence>MLEQPYLDLAQKVLDEGHFKPDRTHTGTYSIFGHQMRFDLSKGFPLLTTKKVPFGLIKSELLWFLRGDTNIRFLLQHKNHIWDEWAFEKWVASPDYHGPDMTDFGHRSQKDPEFAASYREQMAKFDERILTDESFAAKYGDLGLVYGSQWRAWHTSRGDTIDQLGDVIEQIKTHPYSRRLIVSAWNPEDVPTMALPPCHTLFQFYVNDGKLSLQLYQRSADIFLGVPFNIASYALLTHLVAHECGLQVGDFIHTFGDAHLYVNHLDQIKEQLTRTPRQAPTLVLNPDKHDIFDFDMQDIKLLNYDPYPAIKAPVAV</sequence>
<organism>
    <name type="scientific">Lacticaseibacillus paracasei (strain ATCC 334 / BCRC 17002 / CCUG 31169 / CIP 107868 / KCTC 3260 / NRRL B-441)</name>
    <name type="common">Lactobacillus paracasei</name>
    <dbReference type="NCBI Taxonomy" id="321967"/>
    <lineage>
        <taxon>Bacteria</taxon>
        <taxon>Bacillati</taxon>
        <taxon>Bacillota</taxon>
        <taxon>Bacilli</taxon>
        <taxon>Lactobacillales</taxon>
        <taxon>Lactobacillaceae</taxon>
        <taxon>Lacticaseibacillus</taxon>
    </lineage>
</organism>
<evidence type="ECO:0000255" key="1">
    <source>
        <dbReference type="HAMAP-Rule" id="MF_00008"/>
    </source>
</evidence>